<accession>P34096</accession>
<sequence>MALQRTHSLLLLLLLTLLGLGLVQPSYGQDGMYQRFLRQHVHPEETGGSDRYCNLMMQRRKMTLYHCKRFNTFIHEDIWNIRSICSTTNIQCKNGKMNCHEGVVKVTDCRDTGSSRAPNCRYRAIASTRRVVIACEGNPQVPVHFDG</sequence>
<protein>
    <recommendedName>
        <fullName>Ribonuclease 4</fullName>
        <shortName>RNase 4</shortName>
        <ecNumber evidence="5">3.1.27.-</ecNumber>
    </recommendedName>
</protein>
<reference key="1">
    <citation type="journal article" date="1995" name="Biochim. Biophys. Acta">
        <title>Molecular cloning and expression of human ribonuclease 4 cDNA.</title>
        <authorList>
            <person name="Seno M."/>
            <person name="Futami J."/>
            <person name="Tsushima Y."/>
            <person name="Akutagawa K."/>
            <person name="Kosaka M."/>
            <person name="Tada H."/>
            <person name="Yamada H."/>
        </authorList>
    </citation>
    <scope>NUCLEOTIDE SEQUENCE [MRNA]</scope>
    <source>
        <tissue>Pancreas</tissue>
    </source>
</reference>
<reference key="2">
    <citation type="journal article" date="2004" name="Genome Res.">
        <title>The status, quality, and expansion of the NIH full-length cDNA project: the Mammalian Gene Collection (MGC).</title>
        <authorList>
            <consortium name="The MGC Project Team"/>
        </authorList>
    </citation>
    <scope>NUCLEOTIDE SEQUENCE [LARGE SCALE MRNA]</scope>
    <source>
        <tissue>Pancreas</tissue>
    </source>
</reference>
<reference key="3">
    <citation type="journal article" date="1995" name="Nucleic Acids Res.">
        <title>Human ribonuclease 4 (RNase 4): coding sequence, chromosomal localization and identification of two distinct transcripts in human somatic tissues.</title>
        <authorList>
            <person name="Rosenberg H.F."/>
            <person name="Dyer K.D."/>
        </authorList>
    </citation>
    <scope>NUCLEOTIDE SEQUENCE [GENOMIC DNA] OF 29-147</scope>
</reference>
<reference key="4">
    <citation type="journal article" date="1993" name="Eur. J. Biochem.">
        <title>The amino acid sequence of human ribonuclease 4, a highly conserved ribonuclease that cleaves specifically on the 3' side of uridine.</title>
        <authorList>
            <person name="Zhou H.-M."/>
            <person name="Strydom D.J."/>
        </authorList>
    </citation>
    <scope>PROTEIN SEQUENCE OF 29-147</scope>
    <scope>PYROGLUTAMATE FORMATION AT GLN-29</scope>
    <scope>DISULFIDE BONDS</scope>
    <source>
        <tissue>Plasma</tissue>
    </source>
</reference>
<reference key="5">
    <citation type="journal article" date="1986" name="Biochemistry">
        <title>Isolation and characterization of a human colon carcinoma-secreted enzyme with pancreatic ribonuclease-like activity.</title>
        <authorList>
            <person name="Shapiro R."/>
            <person name="Fett J.W."/>
            <person name="Strydom D.J."/>
            <person name="Vallee B.L."/>
        </authorList>
    </citation>
    <scope>FUNCTION</scope>
    <scope>CATALYTIC ACTIVITY</scope>
</reference>
<reference key="6">
    <citation type="journal article" date="2018" name="J. Clin. Invest.">
        <title>Insulin receptor signaling regulates renal collecting duct and intercalated cell antibacterial defenses.</title>
        <authorList>
            <person name="Murtha M.J."/>
            <person name="Eichler T."/>
            <person name="Bender K."/>
            <person name="Metheny J."/>
            <person name="Li B."/>
            <person name="Schwaderer A.L."/>
            <person name="Mosquera C."/>
            <person name="James C."/>
            <person name="Schwartz L."/>
            <person name="Becknell B."/>
            <person name="Spencer J.D."/>
        </authorList>
    </citation>
    <scope>TISSUE SPECIFICITY</scope>
    <scope>INDUCTION</scope>
</reference>
<reference key="7">
    <citation type="journal article" date="2021" name="Am. J. Physiol.">
        <title>Expression and function of human ribonuclease 4 in the kidney and urinary tract.</title>
        <authorList>
            <person name="Bender K."/>
            <person name="Schwartz L.L."/>
            <person name="Cohen A."/>
            <person name="Vasquez C.M."/>
            <person name="Murtha M.J."/>
            <person name="Eichler T."/>
            <person name="Thomas J.P."/>
            <person name="Jackson A."/>
            <person name="Spencer J.D."/>
        </authorList>
    </citation>
    <scope>FUNCTION</scope>
    <scope>SUBCELLULAR LOCATION</scope>
    <scope>TISSUE SPECIFICITY</scope>
</reference>
<reference key="8">
    <citation type="journal article" date="1999" name="J. Mol. Biol.">
        <title>The three-dimensional structure of human RNase 4, unliganded and complexed with d(Up), reveals the basis for its uridine selectivity.</title>
        <authorList>
            <person name="Terzyan S.S."/>
            <person name="Peracaula R."/>
            <person name="de Llorens R."/>
            <person name="Tsushima Y."/>
            <person name="Yamada H."/>
            <person name="Seno M."/>
            <person name="Gomis-Rueth F.-X."/>
            <person name="Coll M."/>
        </authorList>
    </citation>
    <scope>X-RAY CRYSTALLOGRAPHY (2.1 ANGSTROMS) OF 29-147</scope>
</reference>
<gene>
    <name type="primary">RNASE4</name>
    <name type="synonym">RNS4</name>
</gene>
<organism>
    <name type="scientific">Homo sapiens</name>
    <name type="common">Human</name>
    <dbReference type="NCBI Taxonomy" id="9606"/>
    <lineage>
        <taxon>Eukaryota</taxon>
        <taxon>Metazoa</taxon>
        <taxon>Chordata</taxon>
        <taxon>Craniata</taxon>
        <taxon>Vertebrata</taxon>
        <taxon>Euteleostomi</taxon>
        <taxon>Mammalia</taxon>
        <taxon>Eutheria</taxon>
        <taxon>Euarchontoglires</taxon>
        <taxon>Primates</taxon>
        <taxon>Haplorrhini</taxon>
        <taxon>Catarrhini</taxon>
        <taxon>Hominidae</taxon>
        <taxon>Homo</taxon>
    </lineage>
</organism>
<keyword id="KW-0002">3D-structure</keyword>
<keyword id="KW-0044">Antibiotic</keyword>
<keyword id="KW-0929">Antimicrobial</keyword>
<keyword id="KW-0903">Direct protein sequencing</keyword>
<keyword id="KW-1015">Disulfide bond</keyword>
<keyword id="KW-0255">Endonuclease</keyword>
<keyword id="KW-0378">Hydrolase</keyword>
<keyword id="KW-0540">Nuclease</keyword>
<keyword id="KW-1267">Proteomics identification</keyword>
<keyword id="KW-0873">Pyrrolidone carboxylic acid</keyword>
<keyword id="KW-1185">Reference proteome</keyword>
<keyword id="KW-0964">Secreted</keyword>
<keyword id="KW-0732">Signal</keyword>
<feature type="signal peptide" evidence="6">
    <location>
        <begin position="1"/>
        <end position="28"/>
    </location>
</feature>
<feature type="chain" id="PRO_0000030883" description="Ribonuclease 4">
    <location>
        <begin position="29"/>
        <end position="147"/>
    </location>
</feature>
<feature type="active site" description="Proton acceptor" evidence="2">
    <location>
        <position position="40"/>
    </location>
</feature>
<feature type="active site" description="Proton donor" evidence="2">
    <location>
        <position position="144"/>
    </location>
</feature>
<feature type="binding site" evidence="1">
    <location>
        <position position="35"/>
    </location>
    <ligand>
        <name>dUMP</name>
        <dbReference type="ChEBI" id="CHEBI:246422"/>
    </ligand>
</feature>
<feature type="binding site" evidence="1">
    <location>
        <position position="40"/>
    </location>
    <ligand>
        <name>dUMP</name>
        <dbReference type="ChEBI" id="CHEBI:246422"/>
    </ligand>
</feature>
<feature type="binding site" evidence="1">
    <location>
        <position position="68"/>
    </location>
    <ligand>
        <name>dUMP</name>
        <dbReference type="ChEBI" id="CHEBI:246422"/>
    </ligand>
</feature>
<feature type="binding site" evidence="1">
    <location>
        <position position="71"/>
    </location>
    <ligand>
        <name>dUMP</name>
        <dbReference type="ChEBI" id="CHEBI:246422"/>
    </ligand>
</feature>
<feature type="binding site" evidence="1">
    <location>
        <position position="72"/>
    </location>
    <ligand>
        <name>dUMP</name>
        <dbReference type="ChEBI" id="CHEBI:246422"/>
    </ligand>
</feature>
<feature type="binding site" evidence="1">
    <location>
        <position position="145"/>
    </location>
    <ligand>
        <name>dUMP</name>
        <dbReference type="ChEBI" id="CHEBI:246422"/>
    </ligand>
</feature>
<feature type="modified residue" description="Pyrrolidone carboxylic acid" evidence="6">
    <location>
        <position position="29"/>
    </location>
</feature>
<feature type="disulfide bond" evidence="6">
    <location>
        <begin position="53"/>
        <end position="109"/>
    </location>
</feature>
<feature type="disulfide bond" evidence="6">
    <location>
        <begin position="67"/>
        <end position="120"/>
    </location>
</feature>
<feature type="disulfide bond" evidence="6">
    <location>
        <begin position="85"/>
        <end position="135"/>
    </location>
</feature>
<feature type="disulfide bond" evidence="6">
    <location>
        <begin position="92"/>
        <end position="99"/>
    </location>
</feature>
<feature type="sequence variant" id="VAR_024618" description="In dbSNP:rs3748338.">
    <original>T</original>
    <variation>S</variation>
    <location>
        <position position="16"/>
    </location>
</feature>
<feature type="sequence conflict" description="In Ref. 3; AAA96750." evidence="7" ref="3">
    <original>N</original>
    <variation>D</variation>
    <location>
        <position position="54"/>
    </location>
</feature>
<feature type="helix" evidence="8">
    <location>
        <begin position="29"/>
        <end position="40"/>
    </location>
</feature>
<feature type="helix" evidence="8">
    <location>
        <begin position="50"/>
        <end position="59"/>
    </location>
</feature>
<feature type="strand" evidence="8">
    <location>
        <begin position="62"/>
        <end position="66"/>
    </location>
</feature>
<feature type="strand" evidence="8">
    <location>
        <begin position="69"/>
        <end position="74"/>
    </location>
</feature>
<feature type="helix" evidence="8">
    <location>
        <begin position="78"/>
        <end position="82"/>
    </location>
</feature>
<feature type="helix" evidence="8">
    <location>
        <begin position="83"/>
        <end position="86"/>
    </location>
</feature>
<feature type="strand" evidence="8">
    <location>
        <begin position="99"/>
        <end position="111"/>
    </location>
</feature>
<feature type="strand" evidence="8">
    <location>
        <begin position="113"/>
        <end position="115"/>
    </location>
</feature>
<feature type="strand" evidence="8">
    <location>
        <begin position="122"/>
        <end position="136"/>
    </location>
</feature>
<feature type="turn" evidence="8">
    <location>
        <begin position="137"/>
        <end position="140"/>
    </location>
</feature>
<feature type="strand" evidence="8">
    <location>
        <begin position="141"/>
        <end position="147"/>
    </location>
</feature>
<comment type="function">
    <text evidence="4 5">Cleaves preferentially after uridine bases (PubMed:3467790). Has antimicrobial activity against uropathogenic E.coli (UPEC) (PubMed:33818125). Probably contributes to urinary tract sterility (PubMed:33818125).</text>
</comment>
<comment type="subcellular location">
    <subcellularLocation>
        <location evidence="4">Secreted</location>
    </subcellularLocation>
    <text evidence="4">Detected in urine.</text>
</comment>
<comment type="tissue specificity">
    <text evidence="3 4">Expressed in the cortical and medullary tubules of the kidney, and in the transitional epithelium of the urinary bladder (at protein level).</text>
</comment>
<comment type="induction">
    <text evidence="3">Induced in response to insulin.</text>
</comment>
<comment type="similarity">
    <text evidence="7">Belongs to the pancreatic ribonuclease family.</text>
</comment>
<dbReference type="EC" id="3.1.27.-" evidence="5"/>
<dbReference type="EMBL" id="D37931">
    <property type="protein sequence ID" value="BAA07150.1"/>
    <property type="molecule type" value="mRNA"/>
</dbReference>
<dbReference type="EMBL" id="BC015520">
    <property type="protein sequence ID" value="AAH15520.1"/>
    <property type="molecule type" value="mRNA"/>
</dbReference>
<dbReference type="EMBL" id="U36775">
    <property type="protein sequence ID" value="AAA96750.1"/>
    <property type="molecule type" value="Genomic_DNA"/>
</dbReference>
<dbReference type="CCDS" id="CCDS9555.1"/>
<dbReference type="PIR" id="I52489">
    <property type="entry name" value="I52489"/>
</dbReference>
<dbReference type="RefSeq" id="NP_001269121.1">
    <property type="nucleotide sequence ID" value="NM_001282192.2"/>
</dbReference>
<dbReference type="RefSeq" id="NP_001269122.1">
    <property type="nucleotide sequence ID" value="NM_001282193.2"/>
</dbReference>
<dbReference type="RefSeq" id="NP_002928.1">
    <property type="nucleotide sequence ID" value="NM_002937.5"/>
</dbReference>
<dbReference type="RefSeq" id="NP_919412.1">
    <property type="nucleotide sequence ID" value="NM_194431.3"/>
</dbReference>
<dbReference type="PDB" id="1RNF">
    <property type="method" value="X-ray"/>
    <property type="resolution" value="2.10 A"/>
    <property type="chains" value="A/B=29-147"/>
</dbReference>
<dbReference type="PDB" id="2RNF">
    <property type="method" value="X-ray"/>
    <property type="resolution" value="2.40 A"/>
    <property type="chains" value="A/B=29-147"/>
</dbReference>
<dbReference type="PDBsum" id="1RNF"/>
<dbReference type="PDBsum" id="2RNF"/>
<dbReference type="SMR" id="P34096"/>
<dbReference type="BioGRID" id="111967">
    <property type="interactions" value="13"/>
</dbReference>
<dbReference type="FunCoup" id="P34096">
    <property type="interactions" value="448"/>
</dbReference>
<dbReference type="IntAct" id="P34096">
    <property type="interactions" value="12"/>
</dbReference>
<dbReference type="STRING" id="9606.ENSP00000452245"/>
<dbReference type="DrugBank" id="DB03448">
    <property type="generic name" value="2'-Deoxyuridine 3'-Monophosphate"/>
</dbReference>
<dbReference type="BioMuta" id="RNASE4"/>
<dbReference type="DMDM" id="1710614"/>
<dbReference type="jPOST" id="P34096"/>
<dbReference type="MassIVE" id="P34096"/>
<dbReference type="PaxDb" id="9606-ENSP00000452245"/>
<dbReference type="PeptideAtlas" id="P34096"/>
<dbReference type="PRIDE" id="P34096"/>
<dbReference type="ProteomicsDB" id="54939"/>
<dbReference type="Pumba" id="P34096"/>
<dbReference type="Antibodypedia" id="57712">
    <property type="antibodies" value="75 antibodies from 15 providers"/>
</dbReference>
<dbReference type="DNASU" id="6038"/>
<dbReference type="Ensembl" id="ENST00000397995.2">
    <property type="protein sequence ID" value="ENSP00000381081.2"/>
    <property type="gene ID" value="ENSG00000258818.4"/>
</dbReference>
<dbReference type="Ensembl" id="ENST00000555597.1">
    <property type="protein sequence ID" value="ENSP00000451624.1"/>
    <property type="gene ID" value="ENSG00000258818.4"/>
</dbReference>
<dbReference type="Ensembl" id="ENST00000555835.3">
    <property type="protein sequence ID" value="ENSP00000452245.1"/>
    <property type="gene ID" value="ENSG00000258818.4"/>
</dbReference>
<dbReference type="GeneID" id="6038"/>
<dbReference type="KEGG" id="hsa:6038"/>
<dbReference type="MANE-Select" id="ENST00000555835.3">
    <property type="protein sequence ID" value="ENSP00000452245.1"/>
    <property type="RefSeq nucleotide sequence ID" value="NM_002937.5"/>
    <property type="RefSeq protein sequence ID" value="NP_002928.1"/>
</dbReference>
<dbReference type="AGR" id="HGNC:10047"/>
<dbReference type="CTD" id="6038"/>
<dbReference type="DisGeNET" id="6038"/>
<dbReference type="GeneCards" id="RNASE4"/>
<dbReference type="HGNC" id="HGNC:10047">
    <property type="gene designation" value="RNASE4"/>
</dbReference>
<dbReference type="HPA" id="ENSG00000258818">
    <property type="expression patterns" value="Tissue enriched (liver)"/>
</dbReference>
<dbReference type="MalaCards" id="RNASE4"/>
<dbReference type="MIM" id="601030">
    <property type="type" value="gene"/>
</dbReference>
<dbReference type="neXtProt" id="NX_P34096"/>
<dbReference type="OpenTargets" id="ENSG00000258818"/>
<dbReference type="PharmGKB" id="PA34415"/>
<dbReference type="VEuPathDB" id="HostDB:ENSG00000258818"/>
<dbReference type="eggNOG" id="ENOG502S9Q1">
    <property type="taxonomic scope" value="Eukaryota"/>
</dbReference>
<dbReference type="GeneTree" id="ENSGT00940000157645"/>
<dbReference type="HOGENOM" id="CLU_117006_3_1_1"/>
<dbReference type="InParanoid" id="P34096"/>
<dbReference type="OMA" id="ATSHHCK"/>
<dbReference type="OrthoDB" id="8573660at2759"/>
<dbReference type="PAN-GO" id="P34096">
    <property type="GO annotations" value="3 GO annotations based on evolutionary models"/>
</dbReference>
<dbReference type="PhylomeDB" id="P34096"/>
<dbReference type="TreeFam" id="TF333393"/>
<dbReference type="PathwayCommons" id="P34096"/>
<dbReference type="SignaLink" id="P34096"/>
<dbReference type="BioGRID-ORCS" id="6038">
    <property type="hits" value="12 hits in 1140 CRISPR screens"/>
</dbReference>
<dbReference type="ChiTaRS" id="RNASE4">
    <property type="organism name" value="human"/>
</dbReference>
<dbReference type="EvolutionaryTrace" id="P34096"/>
<dbReference type="GeneWiki" id="Ribonuclease_4"/>
<dbReference type="GenomeRNAi" id="6038"/>
<dbReference type="Pharos" id="P34096">
    <property type="development level" value="Tbio"/>
</dbReference>
<dbReference type="PRO" id="PR:P34096"/>
<dbReference type="Proteomes" id="UP000005640">
    <property type="component" value="Chromosome 14"/>
</dbReference>
<dbReference type="RNAct" id="P34096">
    <property type="molecule type" value="protein"/>
</dbReference>
<dbReference type="Bgee" id="ENSG00000258818">
    <property type="expression patterns" value="Expressed in right lobe of liver and 94 other cell types or tissues"/>
</dbReference>
<dbReference type="ExpressionAtlas" id="P34096">
    <property type="expression patterns" value="baseline and differential"/>
</dbReference>
<dbReference type="GO" id="GO:0005576">
    <property type="term" value="C:extracellular region"/>
    <property type="evidence" value="ECO:0000314"/>
    <property type="project" value="UniProtKB"/>
</dbReference>
<dbReference type="GO" id="GO:0005615">
    <property type="term" value="C:extracellular space"/>
    <property type="evidence" value="ECO:0000314"/>
    <property type="project" value="UniProtKB"/>
</dbReference>
<dbReference type="GO" id="GO:0003676">
    <property type="term" value="F:nucleic acid binding"/>
    <property type="evidence" value="ECO:0007669"/>
    <property type="project" value="InterPro"/>
</dbReference>
<dbReference type="GO" id="GO:0004522">
    <property type="term" value="F:ribonuclease A activity"/>
    <property type="evidence" value="ECO:0000303"/>
    <property type="project" value="UniProtKB"/>
</dbReference>
<dbReference type="GO" id="GO:0004540">
    <property type="term" value="F:RNA nuclease activity"/>
    <property type="evidence" value="ECO:0000314"/>
    <property type="project" value="BHF-UCL"/>
</dbReference>
<dbReference type="GO" id="GO:0019731">
    <property type="term" value="P:antibacterial humoral response"/>
    <property type="evidence" value="ECO:0000315"/>
    <property type="project" value="UniProtKB"/>
</dbReference>
<dbReference type="GO" id="GO:0050830">
    <property type="term" value="P:defense response to Gram-positive bacterium"/>
    <property type="evidence" value="ECO:0000318"/>
    <property type="project" value="GO_Central"/>
</dbReference>
<dbReference type="CDD" id="cd06265">
    <property type="entry name" value="RNase_A_canonical"/>
    <property type="match status" value="1"/>
</dbReference>
<dbReference type="FunFam" id="3.10.130.10:FF:000001">
    <property type="entry name" value="Ribonuclease pancreatic"/>
    <property type="match status" value="1"/>
</dbReference>
<dbReference type="Gene3D" id="3.10.130.10">
    <property type="entry name" value="Ribonuclease A-like domain"/>
    <property type="match status" value="1"/>
</dbReference>
<dbReference type="InterPro" id="IPR001427">
    <property type="entry name" value="RNaseA"/>
</dbReference>
<dbReference type="InterPro" id="IPR036816">
    <property type="entry name" value="RNaseA-like_dom_sf"/>
</dbReference>
<dbReference type="InterPro" id="IPR023411">
    <property type="entry name" value="RNaseA_AS"/>
</dbReference>
<dbReference type="InterPro" id="IPR023412">
    <property type="entry name" value="RNaseA_domain"/>
</dbReference>
<dbReference type="PANTHER" id="PTHR11437">
    <property type="entry name" value="RIBONUCLEASE"/>
    <property type="match status" value="1"/>
</dbReference>
<dbReference type="PANTHER" id="PTHR11437:SF53">
    <property type="entry name" value="RIBONUCLEASE 4"/>
    <property type="match status" value="1"/>
</dbReference>
<dbReference type="Pfam" id="PF00074">
    <property type="entry name" value="RnaseA"/>
    <property type="match status" value="1"/>
</dbReference>
<dbReference type="PRINTS" id="PR00794">
    <property type="entry name" value="RIBONUCLEASE"/>
</dbReference>
<dbReference type="SMART" id="SM00092">
    <property type="entry name" value="RNAse_Pc"/>
    <property type="match status" value="1"/>
</dbReference>
<dbReference type="SUPFAM" id="SSF54076">
    <property type="entry name" value="RNase A-like"/>
    <property type="match status" value="1"/>
</dbReference>
<dbReference type="PROSITE" id="PS00127">
    <property type="entry name" value="RNASE_PANCREATIC"/>
    <property type="match status" value="1"/>
</dbReference>
<proteinExistence type="evidence at protein level"/>
<name>RNAS4_HUMAN</name>
<evidence type="ECO:0000250" key="1">
    <source>
        <dbReference type="UniProtKB" id="P15468"/>
    </source>
</evidence>
<evidence type="ECO:0000250" key="2">
    <source>
        <dbReference type="UniProtKB" id="Q9H1E1"/>
    </source>
</evidence>
<evidence type="ECO:0000269" key="3">
    <source>
    </source>
</evidence>
<evidence type="ECO:0000269" key="4">
    <source>
    </source>
</evidence>
<evidence type="ECO:0000269" key="5">
    <source>
    </source>
</evidence>
<evidence type="ECO:0000269" key="6">
    <source>
    </source>
</evidence>
<evidence type="ECO:0000305" key="7"/>
<evidence type="ECO:0007829" key="8">
    <source>
        <dbReference type="PDB" id="1RNF"/>
    </source>
</evidence>